<sequence length="523" mass="59588">MRLARGIKYAVIGAGVALFGVLFGWVMFPAILKSQLKKEMALSKKTDVRKMWEKIPFALDFKIYLFNYTNPEEVQKGAAPIVKEVGPYYFEEWKEKVEIEDHEEDDTITYRKMDTFYFRPELSGPGLTGEETIIMPHVFMMSMAITVYRDKPSMMNMLGKAINGIFDNPSDVFMRVNAMDILFRGVIINCDRTEFAPKAACTAIKKEGAKSLIIEPNNQLRFSLFGLKNHTVDSRVVTVKRGIKNVMDVGQVVAMDGAPQLEIWNDHCNEYQGTDGTIFPPFLTQKDRLQSYSADLCRSFKPWFQKTTYYRGIKTNHYIANMGDFANDPELNCFCETPEKCPPKGLMDLTKCVKAPMYASMPHFLDADPQMLENVKGLNPDMNEHGIQIDFEPISGTPMMAKQRVQFNMELLRVEKIEIMKELPGYIVPLLWIEGGLALNKTFVKMLKNQLFIPKRIVSVIRWWLLSFGMLAALGGVIFHFKDDIMRIAIKGDSSVTKVNPEDGEQKDVSVIGQSHEPPKINM</sequence>
<proteinExistence type="evidence at transcript level"/>
<reference evidence="7 8" key="1">
    <citation type="journal article" date="2001" name="J. Neurobiol.">
        <title>Antennal SNMPs (sensory neuron membrane proteins) of Lepidoptera define a unique family of invertebrate CD36-like proteins.</title>
        <authorList>
            <person name="Rogers M.E."/>
            <person name="Krieger J."/>
            <person name="Vogt R.G."/>
        </authorList>
    </citation>
    <scope>NUCLEOTIDE SEQUENCE [MRNA]</scope>
    <scope>TISSUE SPECIFICITY</scope>
    <scope>DEVELOPMENTAL STAGE</scope>
    <source>
        <tissue evidence="8">Antenna</tissue>
    </source>
</reference>
<feature type="chain" id="PRO_0000408252" description="Sensory neuron membrane protein 1">
    <location>
        <begin position="1"/>
        <end position="523"/>
    </location>
</feature>
<feature type="topological domain" description="Cytoplasmic" evidence="3">
    <location>
        <begin position="1"/>
        <end position="10"/>
    </location>
</feature>
<feature type="transmembrane region" description="Helical" evidence="3">
    <location>
        <begin position="11"/>
        <end position="31"/>
    </location>
</feature>
<feature type="topological domain" description="Extracellular" evidence="3">
    <location>
        <begin position="32"/>
        <end position="458"/>
    </location>
</feature>
<feature type="transmembrane region" description="Helical" evidence="3">
    <location>
        <begin position="459"/>
        <end position="479"/>
    </location>
</feature>
<feature type="topological domain" description="Cytoplasmic" evidence="3">
    <location>
        <begin position="480"/>
        <end position="523"/>
    </location>
</feature>
<feature type="region of interest" description="Disordered" evidence="4">
    <location>
        <begin position="499"/>
        <end position="523"/>
    </location>
</feature>
<feature type="glycosylation site" description="N-linked (GlcNAc...) asparagine" evidence="3">
    <location>
        <position position="67"/>
    </location>
</feature>
<feature type="glycosylation site" description="N-linked (GlcNAc...) asparagine" evidence="3">
    <location>
        <position position="229"/>
    </location>
</feature>
<feature type="glycosylation site" description="N-linked (GlcNAc...) asparagine" evidence="3">
    <location>
        <position position="440"/>
    </location>
</feature>
<feature type="disulfide bond" evidence="2">
    <location>
        <begin position="268"/>
        <end position="333"/>
    </location>
</feature>
<feature type="disulfide bond" evidence="2">
    <location>
        <begin position="297"/>
        <end position="352"/>
    </location>
</feature>
<feature type="disulfide bond" evidence="2">
    <location>
        <begin position="335"/>
        <end position="341"/>
    </location>
</feature>
<organism>
    <name type="scientific">Manduca sexta</name>
    <name type="common">Tobacco hawkmoth</name>
    <name type="synonym">Tobacco hornworm</name>
    <dbReference type="NCBI Taxonomy" id="7130"/>
    <lineage>
        <taxon>Eukaryota</taxon>
        <taxon>Metazoa</taxon>
        <taxon>Ecdysozoa</taxon>
        <taxon>Arthropoda</taxon>
        <taxon>Hexapoda</taxon>
        <taxon>Insecta</taxon>
        <taxon>Pterygota</taxon>
        <taxon>Neoptera</taxon>
        <taxon>Endopterygota</taxon>
        <taxon>Lepidoptera</taxon>
        <taxon>Glossata</taxon>
        <taxon>Ditrysia</taxon>
        <taxon>Bombycoidea</taxon>
        <taxon>Sphingidae</taxon>
        <taxon>Sphinginae</taxon>
        <taxon>Sphingini</taxon>
        <taxon>Manduca</taxon>
    </lineage>
</organism>
<comment type="function">
    <text evidence="1">Plays an olfactory role that is not restricted to pheromone sensitivity.</text>
</comment>
<comment type="subcellular location">
    <subcellularLocation>
        <location evidence="1">Cell membrane</location>
        <topology evidence="1">Multi-pass membrane protein</topology>
    </subcellularLocation>
</comment>
<comment type="tissue specificity">
    <text evidence="5">Localizes to both male and female antennae but not the leg, wing, gut, head, or thoracic ganglia. Detected throughout the sensory epithelium, associating with both sex-pheromone sensilla and plant-volatile sensilla. Differentially expressed both among different sensilla and different neurons within a given sensillum. Expression coincides with that of several other olfactory-specific proteins that are involved in odor detection.</text>
</comment>
<comment type="developmental stage">
    <text evidence="5">Detected at very low levels 48 hours before adult emergence. Levels dramatically increase around 24 hours prior to emergence and are subsequently maintained at a similar level in both newly emerged animals as well as in animals 24 hours postemergence.</text>
</comment>
<comment type="similarity">
    <text evidence="7">Belongs to the CD36 family.</text>
</comment>
<keyword id="KW-1003">Cell membrane</keyword>
<keyword id="KW-1015">Disulfide bond</keyword>
<keyword id="KW-0325">Glycoprotein</keyword>
<keyword id="KW-0472">Membrane</keyword>
<keyword id="KW-0552">Olfaction</keyword>
<keyword id="KW-0675">Receptor</keyword>
<keyword id="KW-0716">Sensory transduction</keyword>
<keyword id="KW-0812">Transmembrane</keyword>
<keyword id="KW-1133">Transmembrane helix</keyword>
<accession>Q9GPH7</accession>
<protein>
    <recommendedName>
        <fullName evidence="8">Sensory neuron membrane protein 1</fullName>
        <shortName evidence="6">SNMP1-Msex</shortName>
    </recommendedName>
</protein>
<evidence type="ECO:0000250" key="1">
    <source>
        <dbReference type="UniProtKB" id="O02351"/>
    </source>
</evidence>
<evidence type="ECO:0000250" key="2">
    <source>
        <dbReference type="UniProtKB" id="P26201"/>
    </source>
</evidence>
<evidence type="ECO:0000255" key="3"/>
<evidence type="ECO:0000256" key="4">
    <source>
        <dbReference type="SAM" id="MobiDB-lite"/>
    </source>
</evidence>
<evidence type="ECO:0000269" key="5">
    <source>
    </source>
</evidence>
<evidence type="ECO:0000303" key="6">
    <source>
    </source>
</evidence>
<evidence type="ECO:0000305" key="7"/>
<evidence type="ECO:0000312" key="8">
    <source>
        <dbReference type="EMBL" id="AAG49366.1"/>
    </source>
</evidence>
<name>SNMP1_MANSE</name>
<dbReference type="EMBL" id="AF323589">
    <property type="protein sequence ID" value="AAG49366.1"/>
    <property type="molecule type" value="mRNA"/>
</dbReference>
<dbReference type="SMR" id="Q9GPH7"/>
<dbReference type="OrthoDB" id="10024078at2759"/>
<dbReference type="GO" id="GO:0005737">
    <property type="term" value="C:cytoplasm"/>
    <property type="evidence" value="ECO:0007669"/>
    <property type="project" value="TreeGrafter"/>
</dbReference>
<dbReference type="GO" id="GO:0005886">
    <property type="term" value="C:plasma membrane"/>
    <property type="evidence" value="ECO:0007669"/>
    <property type="project" value="UniProtKB-SubCell"/>
</dbReference>
<dbReference type="GO" id="GO:0005044">
    <property type="term" value="F:scavenger receptor activity"/>
    <property type="evidence" value="ECO:0007669"/>
    <property type="project" value="TreeGrafter"/>
</dbReference>
<dbReference type="GO" id="GO:0007608">
    <property type="term" value="P:sensory perception of smell"/>
    <property type="evidence" value="ECO:0007669"/>
    <property type="project" value="UniProtKB-KW"/>
</dbReference>
<dbReference type="InterPro" id="IPR002159">
    <property type="entry name" value="CD36_fam"/>
</dbReference>
<dbReference type="PANTHER" id="PTHR11923">
    <property type="entry name" value="SCAVENGER RECEPTOR CLASS B TYPE-1 SR-B1"/>
    <property type="match status" value="1"/>
</dbReference>
<dbReference type="PANTHER" id="PTHR11923:SF69">
    <property type="entry name" value="SENSORY NEURON MEMBRANE PROTEIN 1"/>
    <property type="match status" value="1"/>
</dbReference>
<dbReference type="Pfam" id="PF01130">
    <property type="entry name" value="CD36"/>
    <property type="match status" value="1"/>
</dbReference>
<dbReference type="PRINTS" id="PR01609">
    <property type="entry name" value="CD36FAMILY"/>
</dbReference>